<organism>
    <name type="scientific">Bordetella pertussis (strain Tohama I / ATCC BAA-589 / NCTC 13251)</name>
    <dbReference type="NCBI Taxonomy" id="257313"/>
    <lineage>
        <taxon>Bacteria</taxon>
        <taxon>Pseudomonadati</taxon>
        <taxon>Pseudomonadota</taxon>
        <taxon>Betaproteobacteria</taxon>
        <taxon>Burkholderiales</taxon>
        <taxon>Alcaligenaceae</taxon>
        <taxon>Bordetella</taxon>
    </lineage>
</organism>
<proteinExistence type="inferred from homology"/>
<name>UREG_BORPE</name>
<feature type="chain" id="PRO_0000347350" description="Urease accessory protein UreG">
    <location>
        <begin position="1"/>
        <end position="214"/>
    </location>
</feature>
<feature type="binding site" evidence="1">
    <location>
        <begin position="23"/>
        <end position="30"/>
    </location>
    <ligand>
        <name>GTP</name>
        <dbReference type="ChEBI" id="CHEBI:37565"/>
    </ligand>
</feature>
<evidence type="ECO:0000255" key="1">
    <source>
        <dbReference type="HAMAP-Rule" id="MF_01389"/>
    </source>
</evidence>
<gene>
    <name evidence="1" type="primary">ureG</name>
    <name type="ordered locus">BP3166</name>
</gene>
<sequence length="214" mass="23042">MHDISSLTTRTKALPPLRVGVGGPVGSGKTTLLEMVCKAMYPQFDLIAITNDIYTKEDQRLLTLSGALPPERILGVETGGCPHTAIREDASINLIAIDQMLEQFPDADIVFVESGGDNLAATFSPELSDLTLYIIDVASGEKIPRKGGPGITKSDLFIINKTDLAPYVGADLAVMEADTRRMRGDKPFVMCNLKTGDGLDQVIAFLKTEGLFRG</sequence>
<comment type="function">
    <text evidence="1">Facilitates the functional incorporation of the urease nickel metallocenter. This process requires GTP hydrolysis, probably effectuated by UreG.</text>
</comment>
<comment type="subunit">
    <text evidence="1">Homodimer. UreD, UreF and UreG form a complex that acts as a GTP-hydrolysis-dependent molecular chaperone, activating the urease apoprotein by helping to assemble the nickel containing metallocenter of UreC. The UreE protein probably delivers the nickel.</text>
</comment>
<comment type="subcellular location">
    <subcellularLocation>
        <location evidence="1">Cytoplasm</location>
    </subcellularLocation>
</comment>
<comment type="similarity">
    <text evidence="1">Belongs to the SIMIBI class G3E GTPase family. UreG subfamily.</text>
</comment>
<keyword id="KW-0143">Chaperone</keyword>
<keyword id="KW-0963">Cytoplasm</keyword>
<keyword id="KW-0342">GTP-binding</keyword>
<keyword id="KW-0996">Nickel insertion</keyword>
<keyword id="KW-0547">Nucleotide-binding</keyword>
<keyword id="KW-1185">Reference proteome</keyword>
<protein>
    <recommendedName>
        <fullName evidence="1">Urease accessory protein UreG</fullName>
    </recommendedName>
</protein>
<dbReference type="EMBL" id="BX640420">
    <property type="protein sequence ID" value="CAE43433.1"/>
    <property type="molecule type" value="Genomic_DNA"/>
</dbReference>
<dbReference type="RefSeq" id="NP_881728.1">
    <property type="nucleotide sequence ID" value="NC_002929.2"/>
</dbReference>
<dbReference type="RefSeq" id="WP_010931336.1">
    <property type="nucleotide sequence ID" value="NZ_CP039022.1"/>
</dbReference>
<dbReference type="SMR" id="Q7VUD5"/>
<dbReference type="STRING" id="257313.BP3166"/>
<dbReference type="PaxDb" id="257313-BP3166"/>
<dbReference type="GeneID" id="69603093"/>
<dbReference type="KEGG" id="bpe:BP3166"/>
<dbReference type="PATRIC" id="fig|257313.5.peg.3421"/>
<dbReference type="eggNOG" id="COG0378">
    <property type="taxonomic scope" value="Bacteria"/>
</dbReference>
<dbReference type="HOGENOM" id="CLU_072144_1_0_4"/>
<dbReference type="Proteomes" id="UP000002676">
    <property type="component" value="Chromosome"/>
</dbReference>
<dbReference type="GO" id="GO:0005737">
    <property type="term" value="C:cytoplasm"/>
    <property type="evidence" value="ECO:0007669"/>
    <property type="project" value="UniProtKB-SubCell"/>
</dbReference>
<dbReference type="GO" id="GO:0005525">
    <property type="term" value="F:GTP binding"/>
    <property type="evidence" value="ECO:0007669"/>
    <property type="project" value="UniProtKB-KW"/>
</dbReference>
<dbReference type="GO" id="GO:0003924">
    <property type="term" value="F:GTPase activity"/>
    <property type="evidence" value="ECO:0007669"/>
    <property type="project" value="InterPro"/>
</dbReference>
<dbReference type="GO" id="GO:0016151">
    <property type="term" value="F:nickel cation binding"/>
    <property type="evidence" value="ECO:0007669"/>
    <property type="project" value="UniProtKB-UniRule"/>
</dbReference>
<dbReference type="GO" id="GO:0043419">
    <property type="term" value="P:urea catabolic process"/>
    <property type="evidence" value="ECO:0007669"/>
    <property type="project" value="InterPro"/>
</dbReference>
<dbReference type="CDD" id="cd05540">
    <property type="entry name" value="UreG"/>
    <property type="match status" value="1"/>
</dbReference>
<dbReference type="FunFam" id="3.40.50.300:FF:000208">
    <property type="entry name" value="Urease accessory protein UreG"/>
    <property type="match status" value="1"/>
</dbReference>
<dbReference type="Gene3D" id="3.40.50.300">
    <property type="entry name" value="P-loop containing nucleotide triphosphate hydrolases"/>
    <property type="match status" value="1"/>
</dbReference>
<dbReference type="HAMAP" id="MF_01389">
    <property type="entry name" value="UreG"/>
    <property type="match status" value="1"/>
</dbReference>
<dbReference type="InterPro" id="IPR003495">
    <property type="entry name" value="CobW/HypB/UreG_nucleotide-bd"/>
</dbReference>
<dbReference type="InterPro" id="IPR027417">
    <property type="entry name" value="P-loop_NTPase"/>
</dbReference>
<dbReference type="InterPro" id="IPR004400">
    <property type="entry name" value="UreG"/>
</dbReference>
<dbReference type="NCBIfam" id="TIGR00101">
    <property type="entry name" value="ureG"/>
    <property type="match status" value="1"/>
</dbReference>
<dbReference type="PANTHER" id="PTHR31715">
    <property type="entry name" value="UREASE ACCESSORY PROTEIN G"/>
    <property type="match status" value="1"/>
</dbReference>
<dbReference type="PANTHER" id="PTHR31715:SF0">
    <property type="entry name" value="UREASE ACCESSORY PROTEIN G"/>
    <property type="match status" value="1"/>
</dbReference>
<dbReference type="Pfam" id="PF02492">
    <property type="entry name" value="cobW"/>
    <property type="match status" value="1"/>
</dbReference>
<dbReference type="PIRSF" id="PIRSF005624">
    <property type="entry name" value="Ni-bind_GTPase"/>
    <property type="match status" value="1"/>
</dbReference>
<dbReference type="SUPFAM" id="SSF52540">
    <property type="entry name" value="P-loop containing nucleoside triphosphate hydrolases"/>
    <property type="match status" value="1"/>
</dbReference>
<accession>Q7VUD5</accession>
<reference key="1">
    <citation type="journal article" date="2003" name="Nat. Genet.">
        <title>Comparative analysis of the genome sequences of Bordetella pertussis, Bordetella parapertussis and Bordetella bronchiseptica.</title>
        <authorList>
            <person name="Parkhill J."/>
            <person name="Sebaihia M."/>
            <person name="Preston A."/>
            <person name="Murphy L.D."/>
            <person name="Thomson N.R."/>
            <person name="Harris D.E."/>
            <person name="Holden M.T.G."/>
            <person name="Churcher C.M."/>
            <person name="Bentley S.D."/>
            <person name="Mungall K.L."/>
            <person name="Cerdeno-Tarraga A.-M."/>
            <person name="Temple L."/>
            <person name="James K.D."/>
            <person name="Harris B."/>
            <person name="Quail M.A."/>
            <person name="Achtman M."/>
            <person name="Atkin R."/>
            <person name="Baker S."/>
            <person name="Basham D."/>
            <person name="Bason N."/>
            <person name="Cherevach I."/>
            <person name="Chillingworth T."/>
            <person name="Collins M."/>
            <person name="Cronin A."/>
            <person name="Davis P."/>
            <person name="Doggett J."/>
            <person name="Feltwell T."/>
            <person name="Goble A."/>
            <person name="Hamlin N."/>
            <person name="Hauser H."/>
            <person name="Holroyd S."/>
            <person name="Jagels K."/>
            <person name="Leather S."/>
            <person name="Moule S."/>
            <person name="Norberczak H."/>
            <person name="O'Neil S."/>
            <person name="Ormond D."/>
            <person name="Price C."/>
            <person name="Rabbinowitsch E."/>
            <person name="Rutter S."/>
            <person name="Sanders M."/>
            <person name="Saunders D."/>
            <person name="Seeger K."/>
            <person name="Sharp S."/>
            <person name="Simmonds M."/>
            <person name="Skelton J."/>
            <person name="Squares R."/>
            <person name="Squares S."/>
            <person name="Stevens K."/>
            <person name="Unwin L."/>
            <person name="Whitehead S."/>
            <person name="Barrell B.G."/>
            <person name="Maskell D.J."/>
        </authorList>
    </citation>
    <scope>NUCLEOTIDE SEQUENCE [LARGE SCALE GENOMIC DNA]</scope>
    <source>
        <strain>Tohama I / ATCC BAA-589 / NCTC 13251</strain>
    </source>
</reference>